<protein>
    <recommendedName>
        <fullName evidence="1">Glucose-6-phosphate isomerase</fullName>
        <shortName evidence="1">GPI</shortName>
        <ecNumber evidence="1">5.3.1.9</ecNumber>
    </recommendedName>
    <alternativeName>
        <fullName evidence="1">Phosphoglucose isomerase</fullName>
        <shortName evidence="1">PGI</shortName>
    </alternativeName>
    <alternativeName>
        <fullName evidence="1">Phosphohexose isomerase</fullName>
        <shortName evidence="1">PHI</shortName>
    </alternativeName>
</protein>
<proteinExistence type="inferred from homology"/>
<gene>
    <name evidence="1" type="primary">pgi</name>
    <name type="ordered locus">GSU1311</name>
</gene>
<name>G6PI_GEOSL</name>
<organism>
    <name type="scientific">Geobacter sulfurreducens (strain ATCC 51573 / DSM 12127 / PCA)</name>
    <dbReference type="NCBI Taxonomy" id="243231"/>
    <lineage>
        <taxon>Bacteria</taxon>
        <taxon>Pseudomonadati</taxon>
        <taxon>Thermodesulfobacteriota</taxon>
        <taxon>Desulfuromonadia</taxon>
        <taxon>Geobacterales</taxon>
        <taxon>Geobacteraceae</taxon>
        <taxon>Geobacter</taxon>
    </lineage>
</organism>
<evidence type="ECO:0000255" key="1">
    <source>
        <dbReference type="HAMAP-Rule" id="MF_00473"/>
    </source>
</evidence>
<sequence>MNAHELWQRYQTYLLFDADTGLILDVSRMAFSDDFFASMEPAMQRAFDAMERLEAGEIANPDENRMVGHYWLRSPELAPDPAIAAAIRETVDRVTAFAADVHNGVVTAPRARLFRNVLVIGIGGSALGPQFVADALGGHGDRMRPFFFDNTDPDGMDRVLETLGADGLAETLAIVISKSGGTKETRNGMLEAEAAYRRAGLDFSRHAVAVTGAGSELDRTAEAGGWLCRFPMWDWVGGRTSETSAVGLLPAALQGIPIRDFLDGARTCDTLTRRRETLRNPAALLALMWHHATRGSGSRDMVVLPYKDRLLLFSRYLQQLIMESIGKELDLDGTVVNQGLTVYGNKGSTDQHAYVQQLREGTNNFFVAFIEVLKDREGASLAVEPGFTSGDYLSGFLQGTRTALSEKGRESLTITIPAITPRTVGVLVALFERAVGLYASLVNINAYHQPGVEAGKKAAGGVLALTGEALAFLRREGGTLSATEIAAALGRPEEAETIFRSLLHAAANPDHGVVMEAASPLTRSRFSAR</sequence>
<accession>Q74DK5</accession>
<keyword id="KW-0963">Cytoplasm</keyword>
<keyword id="KW-0312">Gluconeogenesis</keyword>
<keyword id="KW-0324">Glycolysis</keyword>
<keyword id="KW-0413">Isomerase</keyword>
<keyword id="KW-1185">Reference proteome</keyword>
<feature type="chain" id="PRO_0000180647" description="Glucose-6-phosphate isomerase">
    <location>
        <begin position="1"/>
        <end position="529"/>
    </location>
</feature>
<feature type="active site" description="Proton donor" evidence="1">
    <location>
        <position position="323"/>
    </location>
</feature>
<feature type="active site" evidence="1">
    <location>
        <position position="352"/>
    </location>
</feature>
<feature type="active site" evidence="1">
    <location>
        <position position="456"/>
    </location>
</feature>
<dbReference type="EC" id="5.3.1.9" evidence="1"/>
<dbReference type="EMBL" id="AE017180">
    <property type="protein sequence ID" value="AAR34687.1"/>
    <property type="molecule type" value="Genomic_DNA"/>
</dbReference>
<dbReference type="RefSeq" id="NP_952364.1">
    <property type="nucleotide sequence ID" value="NC_002939.5"/>
</dbReference>
<dbReference type="RefSeq" id="WP_010941965.1">
    <property type="nucleotide sequence ID" value="NC_002939.5"/>
</dbReference>
<dbReference type="SMR" id="Q74DK5"/>
<dbReference type="FunCoup" id="Q74DK5">
    <property type="interactions" value="496"/>
</dbReference>
<dbReference type="STRING" id="243231.GSU1311"/>
<dbReference type="EnsemblBacteria" id="AAR34687">
    <property type="protein sequence ID" value="AAR34687"/>
    <property type="gene ID" value="GSU1311"/>
</dbReference>
<dbReference type="KEGG" id="gsu:GSU1311"/>
<dbReference type="PATRIC" id="fig|243231.5.peg.1308"/>
<dbReference type="eggNOG" id="COG0166">
    <property type="taxonomic scope" value="Bacteria"/>
</dbReference>
<dbReference type="HOGENOM" id="CLU_033288_0_0_7"/>
<dbReference type="InParanoid" id="Q74DK5"/>
<dbReference type="OrthoDB" id="140919at2"/>
<dbReference type="UniPathway" id="UPA00109">
    <property type="reaction ID" value="UER00181"/>
</dbReference>
<dbReference type="UniPathway" id="UPA00138"/>
<dbReference type="Proteomes" id="UP000000577">
    <property type="component" value="Chromosome"/>
</dbReference>
<dbReference type="GO" id="GO:0005829">
    <property type="term" value="C:cytosol"/>
    <property type="evidence" value="ECO:0000318"/>
    <property type="project" value="GO_Central"/>
</dbReference>
<dbReference type="GO" id="GO:0097367">
    <property type="term" value="F:carbohydrate derivative binding"/>
    <property type="evidence" value="ECO:0007669"/>
    <property type="project" value="InterPro"/>
</dbReference>
<dbReference type="GO" id="GO:0004347">
    <property type="term" value="F:glucose-6-phosphate isomerase activity"/>
    <property type="evidence" value="ECO:0000318"/>
    <property type="project" value="GO_Central"/>
</dbReference>
<dbReference type="GO" id="GO:0048029">
    <property type="term" value="F:monosaccharide binding"/>
    <property type="evidence" value="ECO:0000318"/>
    <property type="project" value="GO_Central"/>
</dbReference>
<dbReference type="GO" id="GO:0006094">
    <property type="term" value="P:gluconeogenesis"/>
    <property type="evidence" value="ECO:0000318"/>
    <property type="project" value="GO_Central"/>
</dbReference>
<dbReference type="GO" id="GO:0051156">
    <property type="term" value="P:glucose 6-phosphate metabolic process"/>
    <property type="evidence" value="ECO:0000318"/>
    <property type="project" value="GO_Central"/>
</dbReference>
<dbReference type="GO" id="GO:0006096">
    <property type="term" value="P:glycolytic process"/>
    <property type="evidence" value="ECO:0000318"/>
    <property type="project" value="GO_Central"/>
</dbReference>
<dbReference type="CDD" id="cd05015">
    <property type="entry name" value="SIS_PGI_1"/>
    <property type="match status" value="1"/>
</dbReference>
<dbReference type="CDD" id="cd05016">
    <property type="entry name" value="SIS_PGI_2"/>
    <property type="match status" value="1"/>
</dbReference>
<dbReference type="FunFam" id="3.40.50.10490:FF:000021">
    <property type="entry name" value="Glucose-6-phosphate isomerase"/>
    <property type="match status" value="1"/>
</dbReference>
<dbReference type="FunFam" id="3.40.50.10490:FF:000023">
    <property type="entry name" value="Glucose-6-phosphate isomerase"/>
    <property type="match status" value="1"/>
</dbReference>
<dbReference type="Gene3D" id="3.40.50.10490">
    <property type="entry name" value="Glucose-6-phosphate isomerase like protein, domain 1"/>
    <property type="match status" value="3"/>
</dbReference>
<dbReference type="HAMAP" id="MF_00473">
    <property type="entry name" value="G6P_isomerase"/>
    <property type="match status" value="1"/>
</dbReference>
<dbReference type="InterPro" id="IPR001672">
    <property type="entry name" value="G6P_Isomerase"/>
</dbReference>
<dbReference type="InterPro" id="IPR018189">
    <property type="entry name" value="Phosphoglucose_isomerase_CS"/>
</dbReference>
<dbReference type="InterPro" id="IPR046348">
    <property type="entry name" value="SIS_dom_sf"/>
</dbReference>
<dbReference type="InterPro" id="IPR035476">
    <property type="entry name" value="SIS_PGI_1"/>
</dbReference>
<dbReference type="InterPro" id="IPR035482">
    <property type="entry name" value="SIS_PGI_2"/>
</dbReference>
<dbReference type="NCBIfam" id="NF010696">
    <property type="entry name" value="PRK14096.1"/>
    <property type="match status" value="1"/>
</dbReference>
<dbReference type="PANTHER" id="PTHR11469">
    <property type="entry name" value="GLUCOSE-6-PHOSPHATE ISOMERASE"/>
    <property type="match status" value="1"/>
</dbReference>
<dbReference type="PANTHER" id="PTHR11469:SF1">
    <property type="entry name" value="GLUCOSE-6-PHOSPHATE ISOMERASE"/>
    <property type="match status" value="1"/>
</dbReference>
<dbReference type="Pfam" id="PF00342">
    <property type="entry name" value="PGI"/>
    <property type="match status" value="2"/>
</dbReference>
<dbReference type="PRINTS" id="PR00662">
    <property type="entry name" value="G6PISOMERASE"/>
</dbReference>
<dbReference type="SUPFAM" id="SSF53697">
    <property type="entry name" value="SIS domain"/>
    <property type="match status" value="1"/>
</dbReference>
<dbReference type="PROSITE" id="PS00174">
    <property type="entry name" value="P_GLUCOSE_ISOMERASE_2"/>
    <property type="match status" value="1"/>
</dbReference>
<dbReference type="PROSITE" id="PS51463">
    <property type="entry name" value="P_GLUCOSE_ISOMERASE_3"/>
    <property type="match status" value="1"/>
</dbReference>
<reference key="1">
    <citation type="journal article" date="2003" name="Science">
        <title>Genome of Geobacter sulfurreducens: metal reduction in subsurface environments.</title>
        <authorList>
            <person name="Methe B.A."/>
            <person name="Nelson K.E."/>
            <person name="Eisen J.A."/>
            <person name="Paulsen I.T."/>
            <person name="Nelson W.C."/>
            <person name="Heidelberg J.F."/>
            <person name="Wu D."/>
            <person name="Wu M."/>
            <person name="Ward N.L."/>
            <person name="Beanan M.J."/>
            <person name="Dodson R.J."/>
            <person name="Madupu R."/>
            <person name="Brinkac L.M."/>
            <person name="Daugherty S.C."/>
            <person name="DeBoy R.T."/>
            <person name="Durkin A.S."/>
            <person name="Gwinn M.L."/>
            <person name="Kolonay J.F."/>
            <person name="Sullivan S.A."/>
            <person name="Haft D.H."/>
            <person name="Selengut J."/>
            <person name="Davidsen T.M."/>
            <person name="Zafar N."/>
            <person name="White O."/>
            <person name="Tran B."/>
            <person name="Romero C."/>
            <person name="Forberger H.A."/>
            <person name="Weidman J.F."/>
            <person name="Khouri H.M."/>
            <person name="Feldblyum T.V."/>
            <person name="Utterback T.R."/>
            <person name="Van Aken S.E."/>
            <person name="Lovley D.R."/>
            <person name="Fraser C.M."/>
        </authorList>
    </citation>
    <scope>NUCLEOTIDE SEQUENCE [LARGE SCALE GENOMIC DNA]</scope>
    <source>
        <strain>ATCC 51573 / DSM 12127 / PCA</strain>
    </source>
</reference>
<comment type="function">
    <text evidence="1">Catalyzes the reversible isomerization of glucose-6-phosphate to fructose-6-phosphate.</text>
</comment>
<comment type="catalytic activity">
    <reaction evidence="1">
        <text>alpha-D-glucose 6-phosphate = beta-D-fructose 6-phosphate</text>
        <dbReference type="Rhea" id="RHEA:11816"/>
        <dbReference type="ChEBI" id="CHEBI:57634"/>
        <dbReference type="ChEBI" id="CHEBI:58225"/>
        <dbReference type="EC" id="5.3.1.9"/>
    </reaction>
</comment>
<comment type="pathway">
    <text evidence="1">Carbohydrate biosynthesis; gluconeogenesis.</text>
</comment>
<comment type="pathway">
    <text evidence="1">Carbohydrate degradation; glycolysis; D-glyceraldehyde 3-phosphate and glycerone phosphate from D-glucose: step 2/4.</text>
</comment>
<comment type="subcellular location">
    <subcellularLocation>
        <location evidence="1">Cytoplasm</location>
    </subcellularLocation>
</comment>
<comment type="similarity">
    <text evidence="1">Belongs to the GPI family.</text>
</comment>